<sequence length="123" mass="14574">MASLNIIYFMRLYGIPSEDRAEEIANNIKEGEWVFVDRQENKKEFLSAEEAREKFKELINQVRSWKEQMSTLSKYAIFIFVDDTQNPKAIKVYDTSSLGCSTSLVPERWRLYRKEMEGEFNDN</sequence>
<dbReference type="EMBL" id="AE000657">
    <property type="protein sequence ID" value="AAC07857.1"/>
    <property type="molecule type" value="Genomic_DNA"/>
</dbReference>
<dbReference type="PIR" id="H70482">
    <property type="entry name" value="H70482"/>
</dbReference>
<dbReference type="RefSeq" id="NP_214461.1">
    <property type="nucleotide sequence ID" value="NC_000918.1"/>
</dbReference>
<dbReference type="SMR" id="O67892"/>
<dbReference type="STRING" id="224324.aq_2134"/>
<dbReference type="EnsemblBacteria" id="AAC07857">
    <property type="protein sequence ID" value="AAC07857"/>
    <property type="gene ID" value="aq_2134"/>
</dbReference>
<dbReference type="KEGG" id="aae:aq_2134"/>
<dbReference type="PATRIC" id="fig|224324.8.peg.1649"/>
<dbReference type="HOGENOM" id="CLU_2167493_0_0_0"/>
<dbReference type="InParanoid" id="O67892"/>
<dbReference type="OrthoDB" id="14935at2"/>
<dbReference type="Proteomes" id="UP000000798">
    <property type="component" value="Chromosome"/>
</dbReference>
<feature type="chain" id="PRO_0000186972" description="Uncharacterized protein aq_2134">
    <location>
        <begin position="1"/>
        <end position="123"/>
    </location>
</feature>
<feature type="coiled-coil region" evidence="1">
    <location>
        <begin position="36"/>
        <end position="76"/>
    </location>
</feature>
<keyword id="KW-0175">Coiled coil</keyword>
<keyword id="KW-1185">Reference proteome</keyword>
<accession>O67892</accession>
<organism>
    <name type="scientific">Aquifex aeolicus (strain VF5)</name>
    <dbReference type="NCBI Taxonomy" id="224324"/>
    <lineage>
        <taxon>Bacteria</taxon>
        <taxon>Pseudomonadati</taxon>
        <taxon>Aquificota</taxon>
        <taxon>Aquificia</taxon>
        <taxon>Aquificales</taxon>
        <taxon>Aquificaceae</taxon>
        <taxon>Aquifex</taxon>
    </lineage>
</organism>
<proteinExistence type="predicted"/>
<reference key="1">
    <citation type="journal article" date="1998" name="Nature">
        <title>The complete genome of the hyperthermophilic bacterium Aquifex aeolicus.</title>
        <authorList>
            <person name="Deckert G."/>
            <person name="Warren P.V."/>
            <person name="Gaasterland T."/>
            <person name="Young W.G."/>
            <person name="Lenox A.L."/>
            <person name="Graham D.E."/>
            <person name="Overbeek R."/>
            <person name="Snead M.A."/>
            <person name="Keller M."/>
            <person name="Aujay M."/>
            <person name="Huber R."/>
            <person name="Feldman R.A."/>
            <person name="Short J.M."/>
            <person name="Olsen G.J."/>
            <person name="Swanson R.V."/>
        </authorList>
    </citation>
    <scope>NUCLEOTIDE SEQUENCE [LARGE SCALE GENOMIC DNA]</scope>
    <source>
        <strain>VF5</strain>
    </source>
</reference>
<name>Y2134_AQUAE</name>
<protein>
    <recommendedName>
        <fullName>Uncharacterized protein aq_2134</fullName>
    </recommendedName>
</protein>
<gene>
    <name type="ordered locus">aq_2134</name>
</gene>
<evidence type="ECO:0000255" key="1"/>